<evidence type="ECO:0000250" key="1">
    <source>
        <dbReference type="UniProtKB" id="O09171"/>
    </source>
</evidence>
<evidence type="ECO:0000250" key="2">
    <source>
        <dbReference type="UniProtKB" id="Q93088"/>
    </source>
</evidence>
<evidence type="ECO:0000255" key="3">
    <source>
        <dbReference type="PROSITE-ProRule" id="PRU00333"/>
    </source>
</evidence>
<evidence type="ECO:0000305" key="4"/>
<evidence type="ECO:0007744" key="5">
    <source>
    </source>
</evidence>
<keyword id="KW-0963">Cytoplasm</keyword>
<keyword id="KW-0479">Metal-binding</keyword>
<keyword id="KW-0489">Methyltransferase</keyword>
<keyword id="KW-0539">Nucleus</keyword>
<keyword id="KW-0597">Phosphoprotein</keyword>
<keyword id="KW-1185">Reference proteome</keyword>
<keyword id="KW-0808">Transferase</keyword>
<keyword id="KW-0862">Zinc</keyword>
<sequence length="407" mass="45021">MAPVAGKKAKKGILERLNAGEVVIGDGGFVFALEKRGYVKAGPWTPEAAVEHPEAVRQLHREFLRAGSNVMQTFTFYASEDKLENRGNYVAEKISGQKVNEAACDIARQVADEGDALVAGGVSQTPSYLSCKSEVEVKKIFRQQLEVFMKKNVDFLIAEYFEHVEEAVWAVEALKASGKPVAATMCIGPEGDLHGVPPGECAVRLVKAGASIVGVNCHFDPSVSLQTVKLMKEGLEAARLKAYLMSQPLAYHTPDCGKQGFIDLPEFPFGLEPRVATRWDIQKYAREAYNLGVRYIGGCCGFEPYHIRAIAEELAPERGFLPPASEKHGSWGSGLDMHTKPWIRARARKEYWQNLRIASGRPYNPSMSRPDAWGVTKGAAELMQQKEATTEQQLRELFEKQKFKSAQ</sequence>
<accession>O35490</accession>
<accession>Q3UEM1</accession>
<accession>Q3UL72</accession>
<accession>Q561N0</accession>
<organism>
    <name type="scientific">Mus musculus</name>
    <name type="common">Mouse</name>
    <dbReference type="NCBI Taxonomy" id="10090"/>
    <lineage>
        <taxon>Eukaryota</taxon>
        <taxon>Metazoa</taxon>
        <taxon>Chordata</taxon>
        <taxon>Craniata</taxon>
        <taxon>Vertebrata</taxon>
        <taxon>Euteleostomi</taxon>
        <taxon>Mammalia</taxon>
        <taxon>Eutheria</taxon>
        <taxon>Euarchontoglires</taxon>
        <taxon>Glires</taxon>
        <taxon>Rodentia</taxon>
        <taxon>Myomorpha</taxon>
        <taxon>Muroidea</taxon>
        <taxon>Muridae</taxon>
        <taxon>Murinae</taxon>
        <taxon>Mus</taxon>
        <taxon>Mus</taxon>
    </lineage>
</organism>
<reference key="1">
    <citation type="journal article" date="2000" name="Gene">
        <title>Isolation and characterization of a mouse betaine-homocysteine S-methyltransferase gene and pseudogene.</title>
        <authorList>
            <person name="Neece D.J."/>
            <person name="Griffiths M.A."/>
            <person name="Garrow T.A."/>
        </authorList>
    </citation>
    <scope>NUCLEOTIDE SEQUENCE [GENOMIC DNA]</scope>
    <source>
        <strain>129/SvEv</strain>
    </source>
</reference>
<reference key="2">
    <citation type="submission" date="1997-11" db="EMBL/GenBank/DDBJ databases">
        <authorList>
            <person name="Sowden M.P."/>
            <person name="Smith H.C."/>
        </authorList>
    </citation>
    <scope>NUCLEOTIDE SEQUENCE [MRNA]</scope>
    <source>
        <strain>129</strain>
        <tissue>Liver</tissue>
    </source>
</reference>
<reference key="3">
    <citation type="journal article" date="2004" name="Genome Res.">
        <title>The status, quality, and expansion of the NIH full-length cDNA project: the Mammalian Gene Collection (MGC).</title>
        <authorList>
            <consortium name="The MGC Project Team"/>
        </authorList>
    </citation>
    <scope>NUCLEOTIDE SEQUENCE [LARGE SCALE MRNA]</scope>
    <source>
        <strain>FVB/N</strain>
        <tissue>Liver</tissue>
    </source>
</reference>
<reference key="4">
    <citation type="journal article" date="2005" name="Science">
        <title>The transcriptional landscape of the mammalian genome.</title>
        <authorList>
            <person name="Carninci P."/>
            <person name="Kasukawa T."/>
            <person name="Katayama S."/>
            <person name="Gough J."/>
            <person name="Frith M.C."/>
            <person name="Maeda N."/>
            <person name="Oyama R."/>
            <person name="Ravasi T."/>
            <person name="Lenhard B."/>
            <person name="Wells C."/>
            <person name="Kodzius R."/>
            <person name="Shimokawa K."/>
            <person name="Bajic V.B."/>
            <person name="Brenner S.E."/>
            <person name="Batalov S."/>
            <person name="Forrest A.R."/>
            <person name="Zavolan M."/>
            <person name="Davis M.J."/>
            <person name="Wilming L.G."/>
            <person name="Aidinis V."/>
            <person name="Allen J.E."/>
            <person name="Ambesi-Impiombato A."/>
            <person name="Apweiler R."/>
            <person name="Aturaliya R.N."/>
            <person name="Bailey T.L."/>
            <person name="Bansal M."/>
            <person name="Baxter L."/>
            <person name="Beisel K.W."/>
            <person name="Bersano T."/>
            <person name="Bono H."/>
            <person name="Chalk A.M."/>
            <person name="Chiu K.P."/>
            <person name="Choudhary V."/>
            <person name="Christoffels A."/>
            <person name="Clutterbuck D.R."/>
            <person name="Crowe M.L."/>
            <person name="Dalla E."/>
            <person name="Dalrymple B.P."/>
            <person name="de Bono B."/>
            <person name="Della Gatta G."/>
            <person name="di Bernardo D."/>
            <person name="Down T."/>
            <person name="Engstrom P."/>
            <person name="Fagiolini M."/>
            <person name="Faulkner G."/>
            <person name="Fletcher C.F."/>
            <person name="Fukushima T."/>
            <person name="Furuno M."/>
            <person name="Futaki S."/>
            <person name="Gariboldi M."/>
            <person name="Georgii-Hemming P."/>
            <person name="Gingeras T.R."/>
            <person name="Gojobori T."/>
            <person name="Green R.E."/>
            <person name="Gustincich S."/>
            <person name="Harbers M."/>
            <person name="Hayashi Y."/>
            <person name="Hensch T.K."/>
            <person name="Hirokawa N."/>
            <person name="Hill D."/>
            <person name="Huminiecki L."/>
            <person name="Iacono M."/>
            <person name="Ikeo K."/>
            <person name="Iwama A."/>
            <person name="Ishikawa T."/>
            <person name="Jakt M."/>
            <person name="Kanapin A."/>
            <person name="Katoh M."/>
            <person name="Kawasawa Y."/>
            <person name="Kelso J."/>
            <person name="Kitamura H."/>
            <person name="Kitano H."/>
            <person name="Kollias G."/>
            <person name="Krishnan S.P."/>
            <person name="Kruger A."/>
            <person name="Kummerfeld S.K."/>
            <person name="Kurochkin I.V."/>
            <person name="Lareau L.F."/>
            <person name="Lazarevic D."/>
            <person name="Lipovich L."/>
            <person name="Liu J."/>
            <person name="Liuni S."/>
            <person name="McWilliam S."/>
            <person name="Madan Babu M."/>
            <person name="Madera M."/>
            <person name="Marchionni L."/>
            <person name="Matsuda H."/>
            <person name="Matsuzawa S."/>
            <person name="Miki H."/>
            <person name="Mignone F."/>
            <person name="Miyake S."/>
            <person name="Morris K."/>
            <person name="Mottagui-Tabar S."/>
            <person name="Mulder N."/>
            <person name="Nakano N."/>
            <person name="Nakauchi H."/>
            <person name="Ng P."/>
            <person name="Nilsson R."/>
            <person name="Nishiguchi S."/>
            <person name="Nishikawa S."/>
            <person name="Nori F."/>
            <person name="Ohara O."/>
            <person name="Okazaki Y."/>
            <person name="Orlando V."/>
            <person name="Pang K.C."/>
            <person name="Pavan W.J."/>
            <person name="Pavesi G."/>
            <person name="Pesole G."/>
            <person name="Petrovsky N."/>
            <person name="Piazza S."/>
            <person name="Reed J."/>
            <person name="Reid J.F."/>
            <person name="Ring B.Z."/>
            <person name="Ringwald M."/>
            <person name="Rost B."/>
            <person name="Ruan Y."/>
            <person name="Salzberg S.L."/>
            <person name="Sandelin A."/>
            <person name="Schneider C."/>
            <person name="Schoenbach C."/>
            <person name="Sekiguchi K."/>
            <person name="Semple C.A."/>
            <person name="Seno S."/>
            <person name="Sessa L."/>
            <person name="Sheng Y."/>
            <person name="Shibata Y."/>
            <person name="Shimada H."/>
            <person name="Shimada K."/>
            <person name="Silva D."/>
            <person name="Sinclair B."/>
            <person name="Sperling S."/>
            <person name="Stupka E."/>
            <person name="Sugiura K."/>
            <person name="Sultana R."/>
            <person name="Takenaka Y."/>
            <person name="Taki K."/>
            <person name="Tammoja K."/>
            <person name="Tan S.L."/>
            <person name="Tang S."/>
            <person name="Taylor M.S."/>
            <person name="Tegner J."/>
            <person name="Teichmann S.A."/>
            <person name="Ueda H.R."/>
            <person name="van Nimwegen E."/>
            <person name="Verardo R."/>
            <person name="Wei C.L."/>
            <person name="Yagi K."/>
            <person name="Yamanishi H."/>
            <person name="Zabarovsky E."/>
            <person name="Zhu S."/>
            <person name="Zimmer A."/>
            <person name="Hide W."/>
            <person name="Bult C."/>
            <person name="Grimmond S.M."/>
            <person name="Teasdale R.D."/>
            <person name="Liu E.T."/>
            <person name="Brusic V."/>
            <person name="Quackenbush J."/>
            <person name="Wahlestedt C."/>
            <person name="Mattick J.S."/>
            <person name="Hume D.A."/>
            <person name="Kai C."/>
            <person name="Sasaki D."/>
            <person name="Tomaru Y."/>
            <person name="Fukuda S."/>
            <person name="Kanamori-Katayama M."/>
            <person name="Suzuki M."/>
            <person name="Aoki J."/>
            <person name="Arakawa T."/>
            <person name="Iida J."/>
            <person name="Imamura K."/>
            <person name="Itoh M."/>
            <person name="Kato T."/>
            <person name="Kawaji H."/>
            <person name="Kawagashira N."/>
            <person name="Kawashima T."/>
            <person name="Kojima M."/>
            <person name="Kondo S."/>
            <person name="Konno H."/>
            <person name="Nakano K."/>
            <person name="Ninomiya N."/>
            <person name="Nishio T."/>
            <person name="Okada M."/>
            <person name="Plessy C."/>
            <person name="Shibata K."/>
            <person name="Shiraki T."/>
            <person name="Suzuki S."/>
            <person name="Tagami M."/>
            <person name="Waki K."/>
            <person name="Watahiki A."/>
            <person name="Okamura-Oho Y."/>
            <person name="Suzuki H."/>
            <person name="Kawai J."/>
            <person name="Hayashizaki Y."/>
        </authorList>
    </citation>
    <scope>NUCLEOTIDE SEQUENCE [LARGE SCALE MRNA]</scope>
    <source>
        <strain>C57BL/6J</strain>
    </source>
</reference>
<reference key="5">
    <citation type="journal article" date="2010" name="Cell">
        <title>A tissue-specific atlas of mouse protein phosphorylation and expression.</title>
        <authorList>
            <person name="Huttlin E.L."/>
            <person name="Jedrychowski M.P."/>
            <person name="Elias J.E."/>
            <person name="Goswami T."/>
            <person name="Rad R."/>
            <person name="Beausoleil S.A."/>
            <person name="Villen J."/>
            <person name="Haas W."/>
            <person name="Sowa M.E."/>
            <person name="Gygi S.P."/>
        </authorList>
    </citation>
    <scope>IDENTIFICATION BY MASS SPECTROMETRY [LARGE SCALE ANALYSIS]</scope>
    <source>
        <tissue>Kidney</tissue>
        <tissue>Liver</tissue>
        <tissue>Testis</tissue>
    </source>
</reference>
<reference key="6">
    <citation type="journal article" date="2013" name="Mol. Cell">
        <title>SIRT5-mediated lysine desuccinylation impacts diverse metabolic pathways.</title>
        <authorList>
            <person name="Park J."/>
            <person name="Chen Y."/>
            <person name="Tishkoff D.X."/>
            <person name="Peng C."/>
            <person name="Tan M."/>
            <person name="Dai L."/>
            <person name="Xie Z."/>
            <person name="Zhang Y."/>
            <person name="Zwaans B.M."/>
            <person name="Skinner M.E."/>
            <person name="Lombard D.B."/>
            <person name="Zhao Y."/>
        </authorList>
    </citation>
    <scope>SUCCINYLATION [LARGE SCALE ANALYSIS] AT LYS-40; LYS-93; LYS-98; LYS-232; LYS-241; LYS-340 AND LYS-377</scope>
    <scope>IDENTIFICATION BY MASS SPECTROMETRY [LARGE SCALE ANALYSIS]</scope>
    <source>
        <tissue>Liver</tissue>
    </source>
</reference>
<feature type="chain" id="PRO_0000114622" description="Betaine--homocysteine S-methyltransferase 1">
    <location>
        <begin position="1"/>
        <end position="407"/>
    </location>
</feature>
<feature type="domain" description="Hcy-binding" evidence="3">
    <location>
        <begin position="11"/>
        <end position="314"/>
    </location>
</feature>
<feature type="binding site" evidence="2 3">
    <location>
        <position position="217"/>
    </location>
    <ligand>
        <name>Zn(2+)</name>
        <dbReference type="ChEBI" id="CHEBI:29105"/>
    </ligand>
</feature>
<feature type="binding site" evidence="2 3">
    <location>
        <position position="299"/>
    </location>
    <ligand>
        <name>Zn(2+)</name>
        <dbReference type="ChEBI" id="CHEBI:29105"/>
    </ligand>
</feature>
<feature type="binding site" evidence="2 3">
    <location>
        <position position="300"/>
    </location>
    <ligand>
        <name>Zn(2+)</name>
        <dbReference type="ChEBI" id="CHEBI:29105"/>
    </ligand>
</feature>
<feature type="modified residue" description="N6-succinyllysine" evidence="5">
    <location>
        <position position="40"/>
    </location>
</feature>
<feature type="modified residue" description="N6-succinyllysine" evidence="5">
    <location>
        <position position="93"/>
    </location>
</feature>
<feature type="modified residue" description="N6-succinyllysine" evidence="5">
    <location>
        <position position="98"/>
    </location>
</feature>
<feature type="modified residue" description="N6-succinyllysine" evidence="5">
    <location>
        <position position="232"/>
    </location>
</feature>
<feature type="modified residue" description="N6-succinyllysine" evidence="5">
    <location>
        <position position="241"/>
    </location>
</feature>
<feature type="modified residue" description="Phosphoserine" evidence="1">
    <location>
        <position position="330"/>
    </location>
</feature>
<feature type="modified residue" description="N6-succinyllysine" evidence="5">
    <location>
        <position position="340"/>
    </location>
</feature>
<feature type="modified residue" description="N6-succinyllysine" evidence="5">
    <location>
        <position position="377"/>
    </location>
</feature>
<feature type="sequence conflict" description="In Ref. 3; BAE26578." evidence="4" ref="3">
    <original>K</original>
    <variation>E</variation>
    <location>
        <position position="7"/>
    </location>
</feature>
<protein>
    <recommendedName>
        <fullName>Betaine--homocysteine S-methyltransferase 1</fullName>
        <ecNumber evidence="2">2.1.1.5</ecNumber>
    </recommendedName>
</protein>
<dbReference type="EC" id="2.1.1.5" evidence="2"/>
<dbReference type="EMBL" id="AH009623">
    <property type="protein sequence ID" value="AAF85944.1"/>
    <property type="molecule type" value="Genomic_DNA"/>
</dbReference>
<dbReference type="EMBL" id="AF033381">
    <property type="protein sequence ID" value="AAB87501.1"/>
    <property type="molecule type" value="mRNA"/>
</dbReference>
<dbReference type="EMBL" id="AK145668">
    <property type="protein sequence ID" value="BAE26578.1"/>
    <property type="molecule type" value="mRNA"/>
</dbReference>
<dbReference type="EMBL" id="AK149457">
    <property type="protein sequence ID" value="BAE28890.1"/>
    <property type="molecule type" value="mRNA"/>
</dbReference>
<dbReference type="EMBL" id="AK166754">
    <property type="protein sequence ID" value="BAE38995.1"/>
    <property type="molecule type" value="mRNA"/>
</dbReference>
<dbReference type="EMBL" id="AK166818">
    <property type="protein sequence ID" value="BAE39044.1"/>
    <property type="molecule type" value="mRNA"/>
</dbReference>
<dbReference type="EMBL" id="BC037004">
    <property type="protein sequence ID" value="AAH37004.1"/>
    <property type="molecule type" value="mRNA"/>
</dbReference>
<dbReference type="EMBL" id="BC093510">
    <property type="protein sequence ID" value="AAH93510.1"/>
    <property type="molecule type" value="mRNA"/>
</dbReference>
<dbReference type="EMBL" id="BC110307">
    <property type="protein sequence ID" value="AAI10308.1"/>
    <property type="molecule type" value="mRNA"/>
</dbReference>
<dbReference type="CCDS" id="CCDS36748.1"/>
<dbReference type="RefSeq" id="NP_057877.1">
    <property type="nucleotide sequence ID" value="NM_016668.3"/>
</dbReference>
<dbReference type="SMR" id="O35490"/>
<dbReference type="BioGRID" id="198347">
    <property type="interactions" value="2"/>
</dbReference>
<dbReference type="FunCoup" id="O35490">
    <property type="interactions" value="254"/>
</dbReference>
<dbReference type="IntAct" id="O35490">
    <property type="interactions" value="1"/>
</dbReference>
<dbReference type="MINT" id="O35490"/>
<dbReference type="STRING" id="10090.ENSMUSP00000096912"/>
<dbReference type="GlyGen" id="O35490">
    <property type="glycosylation" value="1 site, 1 O-linked glycan (1 site)"/>
</dbReference>
<dbReference type="iPTMnet" id="O35490"/>
<dbReference type="MetOSite" id="O35490"/>
<dbReference type="PhosphoSitePlus" id="O35490"/>
<dbReference type="SwissPalm" id="O35490"/>
<dbReference type="REPRODUCTION-2DPAGE" id="O35490"/>
<dbReference type="CPTAC" id="non-CPTAC-3450"/>
<dbReference type="jPOST" id="O35490"/>
<dbReference type="PaxDb" id="10090-ENSMUSP00000096912"/>
<dbReference type="PeptideAtlas" id="O35490"/>
<dbReference type="ProteomicsDB" id="265212"/>
<dbReference type="DNASU" id="12116"/>
<dbReference type="Ensembl" id="ENSMUST00000091776.7">
    <property type="protein sequence ID" value="ENSMUSP00000135956.2"/>
    <property type="gene ID" value="ENSMUSG00000069324.7"/>
</dbReference>
<dbReference type="Ensembl" id="ENSMUST00000099309.6">
    <property type="protein sequence ID" value="ENSMUSP00000096912.5"/>
    <property type="gene ID" value="ENSMUSG00000074768.7"/>
</dbReference>
<dbReference type="GeneID" id="12116"/>
<dbReference type="KEGG" id="mmu:12116"/>
<dbReference type="UCSC" id="uc007rli.1">
    <property type="organism name" value="mouse"/>
</dbReference>
<dbReference type="AGR" id="MGI:1339972"/>
<dbReference type="CTD" id="635"/>
<dbReference type="MGI" id="MGI:1339972">
    <property type="gene designation" value="Bhmt"/>
</dbReference>
<dbReference type="VEuPathDB" id="HostDB:ENSMUSG00000069324"/>
<dbReference type="VEuPathDB" id="HostDB:ENSMUSG00000074768"/>
<dbReference type="eggNOG" id="KOG1579">
    <property type="taxonomic scope" value="Eukaryota"/>
</dbReference>
<dbReference type="GeneTree" id="ENSGT00390000003122"/>
<dbReference type="HOGENOM" id="CLU_047457_0_0_1"/>
<dbReference type="InParanoid" id="O35490"/>
<dbReference type="OMA" id="CKDKTEV"/>
<dbReference type="OrthoDB" id="261426at2759"/>
<dbReference type="PhylomeDB" id="O35490"/>
<dbReference type="TreeFam" id="TF329202"/>
<dbReference type="BRENDA" id="2.1.1.5">
    <property type="organism ID" value="3474"/>
</dbReference>
<dbReference type="Reactome" id="R-MMU-1614635">
    <property type="pathway name" value="Sulfur amino acid metabolism"/>
</dbReference>
<dbReference type="Reactome" id="R-MMU-6798163">
    <property type="pathway name" value="Choline catabolism"/>
</dbReference>
<dbReference type="UniPathway" id="UPA00051">
    <property type="reaction ID" value="UER00083"/>
</dbReference>
<dbReference type="UniPathway" id="UPA00291">
    <property type="reaction ID" value="UER00432"/>
</dbReference>
<dbReference type="BioGRID-ORCS" id="12116">
    <property type="hits" value="2 hits in 80 CRISPR screens"/>
</dbReference>
<dbReference type="ChiTaRS" id="Bhmt">
    <property type="organism name" value="mouse"/>
</dbReference>
<dbReference type="PRO" id="PR:O35490"/>
<dbReference type="Proteomes" id="UP000000589">
    <property type="component" value="Chromosome 13"/>
</dbReference>
<dbReference type="Proteomes" id="UP000000589">
    <property type="component" value="Chromosome 18"/>
</dbReference>
<dbReference type="RNAct" id="O35490">
    <property type="molecule type" value="protein"/>
</dbReference>
<dbReference type="Bgee" id="ENSMUSG00000069324">
    <property type="expression patterns" value="Expressed in blastoderm cell in morula and 11 other cell types or tissues"/>
</dbReference>
<dbReference type="GO" id="GO:0005829">
    <property type="term" value="C:cytosol"/>
    <property type="evidence" value="ECO:0007669"/>
    <property type="project" value="UniProtKB-SubCell"/>
</dbReference>
<dbReference type="GO" id="GO:0005634">
    <property type="term" value="C:nucleus"/>
    <property type="evidence" value="ECO:0007669"/>
    <property type="project" value="UniProtKB-SubCell"/>
</dbReference>
<dbReference type="GO" id="GO:0047150">
    <property type="term" value="F:betaine-homocysteine S-methyltransferase activity"/>
    <property type="evidence" value="ECO:0000314"/>
    <property type="project" value="MGI"/>
</dbReference>
<dbReference type="GO" id="GO:0008270">
    <property type="term" value="F:zinc ion binding"/>
    <property type="evidence" value="ECO:0007669"/>
    <property type="project" value="InterPro"/>
</dbReference>
<dbReference type="GO" id="GO:0006579">
    <property type="term" value="P:amino-acid betaine catabolic process"/>
    <property type="evidence" value="ECO:0007669"/>
    <property type="project" value="UniProtKB-UniPathway"/>
</dbReference>
<dbReference type="GO" id="GO:0009086">
    <property type="term" value="P:methionine biosynthetic process"/>
    <property type="evidence" value="ECO:0000314"/>
    <property type="project" value="MGI"/>
</dbReference>
<dbReference type="GO" id="GO:0032259">
    <property type="term" value="P:methylation"/>
    <property type="evidence" value="ECO:0007669"/>
    <property type="project" value="UniProtKB-KW"/>
</dbReference>
<dbReference type="FunFam" id="3.20.20.330:FF:000003">
    <property type="entry name" value="Betaine--homocysteine S-methyltransferase 1"/>
    <property type="match status" value="1"/>
</dbReference>
<dbReference type="Gene3D" id="3.20.20.330">
    <property type="entry name" value="Homocysteine-binding-like domain"/>
    <property type="match status" value="1"/>
</dbReference>
<dbReference type="InterPro" id="IPR017226">
    <property type="entry name" value="Betaine-hCys_S-MeTrfase_BHMT"/>
</dbReference>
<dbReference type="InterPro" id="IPR051524">
    <property type="entry name" value="BHMT"/>
</dbReference>
<dbReference type="InterPro" id="IPR003726">
    <property type="entry name" value="HCY_dom"/>
</dbReference>
<dbReference type="InterPro" id="IPR036589">
    <property type="entry name" value="HCY_dom_sf"/>
</dbReference>
<dbReference type="PANTHER" id="PTHR46120">
    <property type="entry name" value="BETAINE--HOMOCYSTEINE S-METHYLTRANSFERASE 1"/>
    <property type="match status" value="1"/>
</dbReference>
<dbReference type="PANTHER" id="PTHR46120:SF2">
    <property type="entry name" value="BETAINE--HOMOCYSTEINE S-METHYLTRANSFERASE 1"/>
    <property type="match status" value="1"/>
</dbReference>
<dbReference type="Pfam" id="PF02574">
    <property type="entry name" value="S-methyl_trans"/>
    <property type="match status" value="1"/>
</dbReference>
<dbReference type="PIRSF" id="PIRSF037505">
    <property type="entry name" value="Betaine_HMT"/>
    <property type="match status" value="1"/>
</dbReference>
<dbReference type="SUPFAM" id="SSF82282">
    <property type="entry name" value="Homocysteine S-methyltransferase"/>
    <property type="match status" value="1"/>
</dbReference>
<dbReference type="PROSITE" id="PS50970">
    <property type="entry name" value="HCY"/>
    <property type="match status" value="1"/>
</dbReference>
<gene>
    <name type="primary">Bhmt</name>
</gene>
<comment type="function">
    <text evidence="2">Involved in the regulation of homocysteine metabolism. Converts betaine and homocysteine to dimethylglycine and methionine, respectively. This reaction is also required for the irreversible oxidation of choline.</text>
</comment>
<comment type="catalytic activity">
    <reaction evidence="2">
        <text>L-homocysteine + glycine betaine = N,N-dimethylglycine + L-methionine</text>
        <dbReference type="Rhea" id="RHEA:22336"/>
        <dbReference type="ChEBI" id="CHEBI:17750"/>
        <dbReference type="ChEBI" id="CHEBI:57844"/>
        <dbReference type="ChEBI" id="CHEBI:58199"/>
        <dbReference type="ChEBI" id="CHEBI:58251"/>
        <dbReference type="EC" id="2.1.1.5"/>
    </reaction>
    <physiologicalReaction direction="left-to-right" evidence="2">
        <dbReference type="Rhea" id="RHEA:22337"/>
    </physiologicalReaction>
</comment>
<comment type="cofactor">
    <cofactor evidence="2">
        <name>Zn(2+)</name>
        <dbReference type="ChEBI" id="CHEBI:29105"/>
    </cofactor>
    <text evidence="2">Binds 1 zinc ion per subunit.</text>
</comment>
<comment type="pathway">
    <text>Amine and polyamine degradation; betaine degradation; sarcosine from betaine: step 1/2.</text>
</comment>
<comment type="pathway">
    <text evidence="2">Amino-acid biosynthesis; L-methionine biosynthesis via de novo pathway; L-methionine from L-homocysteine (BhmT route): step 1/1.</text>
</comment>
<comment type="subunit">
    <text evidence="2">Homotetramer.</text>
</comment>
<comment type="subcellular location">
    <subcellularLocation>
        <location evidence="1">Cytoplasm</location>
        <location evidence="1">Cytosol</location>
    </subcellularLocation>
    <subcellularLocation>
        <location evidence="1">Nucleus</location>
    </subcellularLocation>
    <text evidence="1">Predominantly localized in the cytoplasm with a small fraction detected in the nucleus. Translocates into the nucleus upon oxidative stress.</text>
</comment>
<proteinExistence type="evidence at protein level"/>
<name>BHMT1_MOUSE</name>